<name>HDA_SALA4</name>
<organism>
    <name type="scientific">Salmonella agona (strain SL483)</name>
    <dbReference type="NCBI Taxonomy" id="454166"/>
    <lineage>
        <taxon>Bacteria</taxon>
        <taxon>Pseudomonadati</taxon>
        <taxon>Pseudomonadota</taxon>
        <taxon>Gammaproteobacteria</taxon>
        <taxon>Enterobacterales</taxon>
        <taxon>Enterobacteriaceae</taxon>
        <taxon>Salmonella</taxon>
    </lineage>
</organism>
<keyword id="KW-0235">DNA replication</keyword>
<keyword id="KW-0236">DNA replication inhibitor</keyword>
<protein>
    <recommendedName>
        <fullName evidence="2">DnaA regulatory inactivator Hda</fullName>
    </recommendedName>
</protein>
<gene>
    <name evidence="2" type="primary">hda</name>
    <name type="ordered locus">SeAg_B2643</name>
</gene>
<comment type="function">
    <text evidence="1">Mediates the interaction of DNA replication initiator protein DnaA with DNA polymerase subunit beta sliding clamp (dnaN). Stimulates hydrolysis of ATP-DnaA to ADP-DnaA, rendering DnaA inactive for reinitiation, a process called regulatory inhibition of DnaA or RIDA (By similarity).</text>
</comment>
<comment type="subunit">
    <text evidence="2">The active form seems to be an ADP-bound monomer. Forms the RIDA complex (regulatory inactivation of DnaA) of ATP-DnaA, ADP-Hda and the DNA-loaded beta sliding clamp (dnaN).</text>
</comment>
<comment type="similarity">
    <text evidence="2">Belongs to the DnaA family. HdA subfamily.</text>
</comment>
<reference key="1">
    <citation type="journal article" date="2011" name="J. Bacteriol.">
        <title>Comparative genomics of 28 Salmonella enterica isolates: evidence for CRISPR-mediated adaptive sublineage evolution.</title>
        <authorList>
            <person name="Fricke W.F."/>
            <person name="Mammel M.K."/>
            <person name="McDermott P.F."/>
            <person name="Tartera C."/>
            <person name="White D.G."/>
            <person name="Leclerc J.E."/>
            <person name="Ravel J."/>
            <person name="Cebula T.A."/>
        </authorList>
    </citation>
    <scope>NUCLEOTIDE SEQUENCE [LARGE SCALE GENOMIC DNA]</scope>
    <source>
        <strain>SL483</strain>
    </source>
</reference>
<proteinExistence type="inferred from homology"/>
<evidence type="ECO:0000250" key="1"/>
<evidence type="ECO:0000255" key="2">
    <source>
        <dbReference type="HAMAP-Rule" id="MF_01158"/>
    </source>
</evidence>
<feature type="chain" id="PRO_1000137816" description="DnaA regulatory inactivator Hda">
    <location>
        <begin position="1"/>
        <end position="241"/>
    </location>
</feature>
<dbReference type="EMBL" id="CP001138">
    <property type="protein sequence ID" value="ACH51188.1"/>
    <property type="molecule type" value="Genomic_DNA"/>
</dbReference>
<dbReference type="SMR" id="B5F171"/>
<dbReference type="KEGG" id="sea:SeAg_B2643"/>
<dbReference type="HOGENOM" id="CLU_072265_1_1_6"/>
<dbReference type="Proteomes" id="UP000008819">
    <property type="component" value="Chromosome"/>
</dbReference>
<dbReference type="GO" id="GO:0006270">
    <property type="term" value="P:DNA replication initiation"/>
    <property type="evidence" value="ECO:0007669"/>
    <property type="project" value="TreeGrafter"/>
</dbReference>
<dbReference type="GO" id="GO:0032297">
    <property type="term" value="P:negative regulation of DNA-templated DNA replication initiation"/>
    <property type="evidence" value="ECO:0007669"/>
    <property type="project" value="InterPro"/>
</dbReference>
<dbReference type="FunFam" id="1.10.8.60:FF:000024">
    <property type="entry name" value="DnaA regulatory inactivator Hda"/>
    <property type="match status" value="1"/>
</dbReference>
<dbReference type="FunFam" id="3.40.50.300:FF:000452">
    <property type="entry name" value="DnaA regulatory inactivator Hda"/>
    <property type="match status" value="1"/>
</dbReference>
<dbReference type="Gene3D" id="1.10.8.60">
    <property type="match status" value="1"/>
</dbReference>
<dbReference type="Gene3D" id="3.40.50.300">
    <property type="entry name" value="P-loop containing nucleotide triphosphate hydrolases"/>
    <property type="match status" value="1"/>
</dbReference>
<dbReference type="HAMAP" id="MF_01158">
    <property type="entry name" value="Hda"/>
    <property type="match status" value="1"/>
</dbReference>
<dbReference type="InterPro" id="IPR020591">
    <property type="entry name" value="Chromosome_initiator_DnaA-like"/>
</dbReference>
<dbReference type="InterPro" id="IPR013317">
    <property type="entry name" value="DnaA_dom"/>
</dbReference>
<dbReference type="InterPro" id="IPR017788">
    <property type="entry name" value="Hda"/>
</dbReference>
<dbReference type="InterPro" id="IPR022864">
    <property type="entry name" value="Hda_Enterobact"/>
</dbReference>
<dbReference type="InterPro" id="IPR055199">
    <property type="entry name" value="Hda_lid"/>
</dbReference>
<dbReference type="InterPro" id="IPR027417">
    <property type="entry name" value="P-loop_NTPase"/>
</dbReference>
<dbReference type="NCBIfam" id="TIGR03420">
    <property type="entry name" value="DnaA_homol_Hda"/>
    <property type="match status" value="1"/>
</dbReference>
<dbReference type="NCBIfam" id="NF005982">
    <property type="entry name" value="PRK08084.1"/>
    <property type="match status" value="1"/>
</dbReference>
<dbReference type="PANTHER" id="PTHR30050">
    <property type="entry name" value="CHROMOSOMAL REPLICATION INITIATOR PROTEIN DNAA"/>
    <property type="match status" value="1"/>
</dbReference>
<dbReference type="PANTHER" id="PTHR30050:SF5">
    <property type="entry name" value="DNAA REGULATORY INACTIVATOR HDA"/>
    <property type="match status" value="1"/>
</dbReference>
<dbReference type="Pfam" id="PF00308">
    <property type="entry name" value="Bac_DnaA"/>
    <property type="match status" value="1"/>
</dbReference>
<dbReference type="Pfam" id="PF22688">
    <property type="entry name" value="Hda_lid"/>
    <property type="match status" value="1"/>
</dbReference>
<dbReference type="PRINTS" id="PR00051">
    <property type="entry name" value="DNAA"/>
</dbReference>
<dbReference type="SUPFAM" id="SSF52540">
    <property type="entry name" value="P-loop containing nucleoside triphosphate hydrolases"/>
    <property type="match status" value="1"/>
</dbReference>
<accession>B5F171</accession>
<sequence>MSSWVEVSLNTPAQLSLPLYLPDDETFASFWPGDNASLLAALQNVLRQEHSGYIYLWAREGAGRSHLLHAACAELSQRGDAVGYVPLDKRTWFVPEVLDGMEHLSLVCIDNIECVAGDELWEMAIFDLYNRILESGKTRLLITGDRPPRQLNLGLPDLASRLDWGQIYKLQPLSDEDKLQALQLRARLRGFELPEDVGRFLLKRLDREMRTLFMTLDQLDHASITAQRKLTIPFVKEILKL</sequence>